<feature type="chain" id="PRO_0000448959" description="Trehalase">
    <location>
        <begin position="1"/>
        <end position="623"/>
    </location>
</feature>
<feature type="mutagenesis site" description="Less than 1% of wild-type activity." evidence="1">
    <original>E</original>
    <variation>Q</variation>
    <location>
        <position position="418"/>
    </location>
</feature>
<feature type="mutagenesis site" description="4% of wild-type activity." evidence="1">
    <original>E</original>
    <variation>Q</variation>
    <location>
        <position position="571"/>
    </location>
</feature>
<name>TREH_THEVO</name>
<gene>
    <name evidence="3" type="ordered locus">TV1338</name>
    <name evidence="4" type="ORF">TVG1381191</name>
</gene>
<dbReference type="EC" id="3.2.1.28" evidence="1"/>
<dbReference type="EMBL" id="BA000011">
    <property type="protein sequence ID" value="BAB60480.1"/>
    <property type="molecule type" value="Genomic_DNA"/>
</dbReference>
<dbReference type="RefSeq" id="WP_241760278.1">
    <property type="nucleotide sequence ID" value="NC_002689.2"/>
</dbReference>
<dbReference type="SMR" id="Q978S7"/>
<dbReference type="STRING" id="273116.gene:9382146"/>
<dbReference type="CAZy" id="GH15">
    <property type="family name" value="Glycoside Hydrolase Family 15"/>
</dbReference>
<dbReference type="PaxDb" id="273116-14325577"/>
<dbReference type="GeneID" id="1441455"/>
<dbReference type="KEGG" id="tvo:TVG1381191"/>
<dbReference type="eggNOG" id="arCOG03286">
    <property type="taxonomic scope" value="Archaea"/>
</dbReference>
<dbReference type="HOGENOM" id="CLU_010399_2_0_2"/>
<dbReference type="PhylomeDB" id="Q978S7"/>
<dbReference type="UniPathway" id="UPA00300">
    <property type="reaction ID" value="UER00535"/>
</dbReference>
<dbReference type="Proteomes" id="UP000001017">
    <property type="component" value="Chromosome"/>
</dbReference>
<dbReference type="GO" id="GO:0004555">
    <property type="term" value="F:alpha,alpha-trehalase activity"/>
    <property type="evidence" value="ECO:0007669"/>
    <property type="project" value="UniProtKB-EC"/>
</dbReference>
<dbReference type="GO" id="GO:0005993">
    <property type="term" value="P:trehalose catabolic process"/>
    <property type="evidence" value="ECO:0007669"/>
    <property type="project" value="UniProtKB-UniPathway"/>
</dbReference>
<dbReference type="Gene3D" id="1.50.10.10">
    <property type="match status" value="1"/>
</dbReference>
<dbReference type="InterPro" id="IPR008928">
    <property type="entry name" value="6-hairpin_glycosidase_sf"/>
</dbReference>
<dbReference type="InterPro" id="IPR012341">
    <property type="entry name" value="6hp_glycosidase-like_sf"/>
</dbReference>
<dbReference type="InterPro" id="IPR011613">
    <property type="entry name" value="GH15-like"/>
</dbReference>
<dbReference type="InterPro" id="IPR045582">
    <property type="entry name" value="Trehalase-like_N"/>
</dbReference>
<dbReference type="PANTHER" id="PTHR31616:SF0">
    <property type="entry name" value="GLUCAN 1,4-ALPHA-GLUCOSIDASE"/>
    <property type="match status" value="1"/>
</dbReference>
<dbReference type="PANTHER" id="PTHR31616">
    <property type="entry name" value="TREHALASE"/>
    <property type="match status" value="1"/>
</dbReference>
<dbReference type="Pfam" id="PF00723">
    <property type="entry name" value="Glyco_hydro_15"/>
    <property type="match status" value="1"/>
</dbReference>
<dbReference type="Pfam" id="PF19291">
    <property type="entry name" value="TREH_N"/>
    <property type="match status" value="1"/>
</dbReference>
<dbReference type="SUPFAM" id="SSF48208">
    <property type="entry name" value="Six-hairpin glycosidases"/>
    <property type="match status" value="1"/>
</dbReference>
<reference key="1">
    <citation type="journal article" date="2000" name="Proc. Natl. Acad. Sci. U.S.A.">
        <title>Archaeal adaptation to higher temperatures revealed by genomic sequence of Thermoplasma volcanium.</title>
        <authorList>
            <person name="Kawashima T."/>
            <person name="Amano N."/>
            <person name="Koike H."/>
            <person name="Makino S."/>
            <person name="Higuchi S."/>
            <person name="Kawashima-Ohya Y."/>
            <person name="Watanabe K."/>
            <person name="Yamazaki M."/>
            <person name="Kanehori K."/>
            <person name="Kawamoto T."/>
            <person name="Nunoshiba T."/>
            <person name="Yamamoto Y."/>
            <person name="Aramaki H."/>
            <person name="Makino K."/>
            <person name="Suzuki M."/>
        </authorList>
    </citation>
    <scope>NUCLEOTIDE SEQUENCE [LARGE SCALE GENOMIC DNA]</scope>
    <source>
        <strain>ATCC 51530 / DSM 4299 / JCM 9571 / NBRC 15438 / GSS1</strain>
    </source>
</reference>
<reference key="2">
    <citation type="journal article" date="2015" name="Appl. Environ. Microbiol.">
        <title>Identification of GH15 family thermophilic archaeal trehalases that function within a narrow acidic-pH range.</title>
        <authorList>
            <person name="Sakaguchi M."/>
            <person name="Shimodaira S."/>
            <person name="Ishida S.N."/>
            <person name="Amemiya M."/>
            <person name="Honda S."/>
            <person name="Sugahara Y."/>
            <person name="Oyama F."/>
            <person name="Kawakita M."/>
        </authorList>
    </citation>
    <scope>FUNCTION</scope>
    <scope>CATALYTIC ACTIVITY</scope>
    <scope>ACTIVITY REGULATION</scope>
    <scope>BIOPHYSICOCHEMICAL PROPERTIES</scope>
    <scope>SUBUNIT</scope>
    <scope>MUTAGENESIS OF GLU-418 AND GLU-571</scope>
    <source>
        <strain>ATCC 51530 / DSM 4299 / JCM 9571 / NBRC 15438 / GSS1</strain>
    </source>
</reference>
<sequence>MKKIPHELTHMAFHGLVKYSDITVEGYPKIQYHGFIGNNRTAMLVAMNGYIDWGCLPNFNSNAVFSSILDKNKGGYFAIFPSDTTDVYVDQYYKEMTNVLVTEFVKNGKIILRLTDFMPDSEYGKISFPEVHRFVESFSEPIDITIDFKPTFNYGQDKPIIEKDQHGFIFTTDKESIGISSEFPLRKNSDRIFGNVKMEPRSSSWIIALYGIHHLFRTTDYKSYLRLQETTDYWRKWASSSSYAGAYHSMVMRSALALKVLFYEPTGLMVAAPTASLPEAIGGERNWDYRFTWIRDTAYVIEALSSIGYKYEATEFLYDMMDMITRDNRIRTIYSIDDSNDLEERIIDYEGYRGSRPVRIGNKAVDQLQIDQYGSIVRAIHSMAKAGGIVNSYLWDFVEQVMAKIEYLWKYPDSSIWEFRTEPKQYVYSKVMSWAAFDSAISMAKDLGLSAPIKQWKSIQDEIKKEVLEKGFDTDTNSFVQYYGSKNIDAALLRLPILGFIPANDEKFLGTLSRIEKELMVDGYLFKRYREDDGLKGDEGSFLMLTFWYIEDLILMKRLKKAREVLESVLEKANHLGLYSEEIDEKSGDFLGNFPQALSHLGVIRVAPKLEEALLKRTSKINS</sequence>
<proteinExistence type="evidence at protein level"/>
<protein>
    <recommendedName>
        <fullName evidence="2">Trehalase</fullName>
        <ecNumber evidence="1">3.2.1.28</ecNumber>
    </recommendedName>
    <alternativeName>
        <fullName evidence="3">Alpha,alpha-trehalase</fullName>
    </alternativeName>
</protein>
<evidence type="ECO:0000269" key="1">
    <source>
    </source>
</evidence>
<evidence type="ECO:0000303" key="2">
    <source>
    </source>
</evidence>
<evidence type="ECO:0000305" key="3"/>
<evidence type="ECO:0000312" key="4">
    <source>
        <dbReference type="EMBL" id="BAB60480.1"/>
    </source>
</evidence>
<accession>Q978S7</accession>
<comment type="function">
    <text evidence="1">Catalyzes the hydrolysis of alpha,alpha-trehalose into two molecules of D-glucose.</text>
</comment>
<comment type="catalytic activity">
    <reaction evidence="1">
        <text>alpha,alpha-trehalose + H2O = alpha-D-glucose + beta-D-glucose</text>
        <dbReference type="Rhea" id="RHEA:32675"/>
        <dbReference type="ChEBI" id="CHEBI:15377"/>
        <dbReference type="ChEBI" id="CHEBI:15903"/>
        <dbReference type="ChEBI" id="CHEBI:16551"/>
        <dbReference type="ChEBI" id="CHEBI:17925"/>
        <dbReference type="EC" id="3.2.1.28"/>
    </reaction>
</comment>
<comment type="activity regulation">
    <text evidence="1">Inhibited by validamycin A.</text>
</comment>
<comment type="biophysicochemical properties">
    <kinetics>
        <KM evidence="1">48.7 mM for trehalose</KM>
        <text evidence="1">kcat is 63.0 sec(-1).</text>
    </kinetics>
    <phDependence>
        <text evidence="1">Optimum pH is 3.7. Active within a narrow range of acidic pH values (pH 3.3 to 4.0).</text>
    </phDependence>
    <temperatureDependence>
        <text evidence="1">Optimum temperature is 60 degrees Celsius.</text>
    </temperatureDependence>
</comment>
<comment type="pathway">
    <text evidence="3">Glycan degradation; trehalose degradation; D-glucose from alpha,alpha-trehalose: step 1/1.</text>
</comment>
<comment type="subunit">
    <text evidence="1">Monomer.</text>
</comment>
<comment type="similarity">
    <text evidence="3">Belongs to the glycosyl hydrolase 15 family.</text>
</comment>
<keyword id="KW-0119">Carbohydrate metabolism</keyword>
<keyword id="KW-0326">Glycosidase</keyword>
<keyword id="KW-0378">Hydrolase</keyword>
<organism>
    <name type="scientific">Thermoplasma volcanium (strain ATCC 51530 / DSM 4299 / JCM 9571 / NBRC 15438 / GSS1)</name>
    <dbReference type="NCBI Taxonomy" id="273116"/>
    <lineage>
        <taxon>Archaea</taxon>
        <taxon>Methanobacteriati</taxon>
        <taxon>Thermoplasmatota</taxon>
        <taxon>Thermoplasmata</taxon>
        <taxon>Thermoplasmatales</taxon>
        <taxon>Thermoplasmataceae</taxon>
        <taxon>Thermoplasma</taxon>
    </lineage>
</organism>